<keyword id="KW-0002">3D-structure</keyword>
<keyword id="KW-0064">Aspartyl protease</keyword>
<keyword id="KW-0222">Digestion</keyword>
<keyword id="KW-0903">Direct protein sequencing</keyword>
<keyword id="KW-1015">Disulfide bond</keyword>
<keyword id="KW-0378">Hydrolase</keyword>
<keyword id="KW-0645">Protease</keyword>
<keyword id="KW-1185">Reference proteome</keyword>
<keyword id="KW-0732">Signal</keyword>
<keyword id="KW-0865">Zymogen</keyword>
<feature type="signal peptide" evidence="4 5 9">
    <location>
        <begin position="1"/>
        <end position="16"/>
    </location>
</feature>
<feature type="propeptide" id="PRO_0000025988" description="Activation peptide" evidence="6">
    <location>
        <begin position="17"/>
        <end position="58"/>
    </location>
</feature>
<feature type="chain" id="PRO_0000025989" description="Chymosin">
    <location>
        <begin position="59"/>
        <end position="381"/>
    </location>
</feature>
<feature type="domain" description="Peptidase A1" evidence="1">
    <location>
        <begin position="74"/>
        <end position="378"/>
    </location>
</feature>
<feature type="active site" evidence="2 5 7">
    <location>
        <position position="92"/>
    </location>
</feature>
<feature type="active site" evidence="2 5 7">
    <location>
        <position position="274"/>
    </location>
</feature>
<feature type="disulfide bond" evidence="6">
    <location>
        <begin position="105"/>
        <end position="110"/>
    </location>
</feature>
<feature type="disulfide bond" evidence="6">
    <location>
        <begin position="265"/>
        <end position="269"/>
    </location>
</feature>
<feature type="disulfide bond" evidence="6">
    <location>
        <begin position="308"/>
        <end position="341"/>
    </location>
</feature>
<feature type="sequence variant" description="In chymosin A." evidence="8 10">
    <original>G</original>
    <variation>D</variation>
    <location>
        <position position="302"/>
    </location>
</feature>
<feature type="mutagenesis site" description="Propeptide is not cleaved." evidence="3">
    <original>C</original>
    <variation>D</variation>
    <location>
        <position position="308"/>
    </location>
</feature>
<feature type="mutagenesis site" description="Propeptide is not cleaved." evidence="3">
    <original>C</original>
    <variation>S</variation>
    <location>
        <position position="341"/>
    </location>
</feature>
<feature type="sequence conflict" description="In Ref. 3; AAA30446." evidence="11" ref="3">
    <original>A</original>
    <variation>T</variation>
    <location>
        <position position="17"/>
    </location>
</feature>
<feature type="sequence conflict" description="In Ref. 3; AAA30446." evidence="11" ref="3">
    <original>A</original>
    <variation>G</variation>
    <location>
        <position position="109"/>
    </location>
</feature>
<feature type="sequence conflict" description="In Ref. 1; AAA30447." evidence="11" ref="1">
    <original>V</original>
    <variation>L</variation>
    <location>
        <position position="155"/>
    </location>
</feature>
<feature type="sequence conflict" description="In Ref. 7; AA sequence." evidence="11" ref="7">
    <original>Y</original>
    <variation>T</variation>
    <location>
        <position position="174"/>
    </location>
</feature>
<feature type="sequence conflict" description="In Ref. 7; AA sequence and 9; AA sequence." evidence="11" ref="7 9">
    <original>N</original>
    <variation>D</variation>
    <location>
        <position position="218"/>
    </location>
</feature>
<feature type="sequence conflict" description="In Ref. 2; AAA30448." evidence="11" ref="2">
    <original>D</original>
    <variation>N</variation>
    <location>
        <position position="230"/>
    </location>
</feature>
<feature type="sequence conflict" description="In Ref. 1; AAA30447." evidence="11" ref="1">
    <original>S</original>
    <variation>C</variation>
    <location>
        <position position="232"/>
    </location>
</feature>
<feature type="sequence conflict" description="In Ref. 9; AA sequence." evidence="11" ref="9">
    <original>T</original>
    <variation>Y</variation>
    <location>
        <position position="252"/>
    </location>
</feature>
<feature type="sequence conflict" description="In Ref. 5." evidence="11" ref="5">
    <original>M</original>
    <variation>I</variation>
    <location>
        <position position="325"/>
    </location>
</feature>
<feature type="sequence conflict" description="In Ref. 5." evidence="11" ref="5">
    <original>S</original>
    <variation>G</variation>
    <location>
        <position position="335"/>
    </location>
</feature>
<feature type="sequence conflict" description="In Ref. 5." evidence="11" ref="5">
    <original>S</original>
    <variation>T</variation>
    <location>
        <position position="343"/>
    </location>
</feature>
<feature type="sequence conflict" description="In Ref. 5." evidence="11" ref="5">
    <original>A</original>
    <variation>T</variation>
    <location>
        <position position="380"/>
    </location>
</feature>
<feature type="strand" evidence="13">
    <location>
        <begin position="62"/>
        <end position="65"/>
    </location>
</feature>
<feature type="strand" evidence="13">
    <location>
        <begin position="67"/>
        <end position="69"/>
    </location>
</feature>
<feature type="turn" evidence="13">
    <location>
        <begin position="70"/>
        <end position="72"/>
    </location>
</feature>
<feature type="strand" evidence="13">
    <location>
        <begin position="73"/>
        <end position="80"/>
    </location>
</feature>
<feature type="turn" evidence="13">
    <location>
        <begin position="81"/>
        <end position="84"/>
    </location>
</feature>
<feature type="strand" evidence="13">
    <location>
        <begin position="85"/>
        <end position="92"/>
    </location>
</feature>
<feature type="strand" evidence="13">
    <location>
        <begin position="98"/>
        <end position="100"/>
    </location>
</feature>
<feature type="helix" evidence="13">
    <location>
        <begin position="108"/>
        <end position="111"/>
    </location>
</feature>
<feature type="helix" evidence="13">
    <location>
        <begin position="118"/>
        <end position="120"/>
    </location>
</feature>
<feature type="strand" evidence="13">
    <location>
        <begin position="125"/>
        <end position="134"/>
    </location>
</feature>
<feature type="strand" evidence="13">
    <location>
        <begin position="139"/>
        <end position="151"/>
    </location>
</feature>
<feature type="strand" evidence="13">
    <location>
        <begin position="154"/>
        <end position="166"/>
    </location>
</feature>
<feature type="turn" evidence="13">
    <location>
        <begin position="171"/>
        <end position="173"/>
    </location>
</feature>
<feature type="strand" evidence="13">
    <location>
        <begin position="176"/>
        <end position="182"/>
    </location>
</feature>
<feature type="helix" evidence="13">
    <location>
        <begin position="186"/>
        <end position="188"/>
    </location>
</feature>
<feature type="helix" evidence="13">
    <location>
        <begin position="196"/>
        <end position="202"/>
    </location>
</feature>
<feature type="strand" evidence="13">
    <location>
        <begin position="206"/>
        <end position="214"/>
    </location>
</feature>
<feature type="strand" evidence="13">
    <location>
        <begin position="217"/>
        <end position="220"/>
    </location>
</feature>
<feature type="strand" evidence="13">
    <location>
        <begin position="223"/>
        <end position="227"/>
    </location>
</feature>
<feature type="helix" evidence="13">
    <location>
        <begin position="231"/>
        <end position="233"/>
    </location>
</feature>
<feature type="strand" evidence="13">
    <location>
        <begin position="234"/>
        <end position="242"/>
    </location>
</feature>
<feature type="turn" evidence="13">
    <location>
        <begin position="246"/>
        <end position="249"/>
    </location>
</feature>
<feature type="strand" evidence="13">
    <location>
        <begin position="250"/>
        <end position="253"/>
    </location>
</feature>
<feature type="strand" evidence="13">
    <location>
        <begin position="255"/>
        <end position="258"/>
    </location>
</feature>
<feature type="strand" evidence="13">
    <location>
        <begin position="261"/>
        <end position="264"/>
    </location>
</feature>
<feature type="strand" evidence="13">
    <location>
        <begin position="269"/>
        <end position="273"/>
    </location>
</feature>
<feature type="strand" evidence="13">
    <location>
        <begin position="279"/>
        <end position="283"/>
    </location>
</feature>
<feature type="helix" evidence="13">
    <location>
        <begin position="284"/>
        <end position="294"/>
    </location>
</feature>
<feature type="strand" evidence="12">
    <location>
        <begin position="297"/>
        <end position="299"/>
    </location>
</feature>
<feature type="turn" evidence="12">
    <location>
        <begin position="300"/>
        <end position="302"/>
    </location>
</feature>
<feature type="strand" evidence="13">
    <location>
        <begin position="304"/>
        <end position="306"/>
    </location>
</feature>
<feature type="helix" evidence="13">
    <location>
        <begin position="308"/>
        <end position="313"/>
    </location>
</feature>
<feature type="strand" evidence="13">
    <location>
        <begin position="317"/>
        <end position="321"/>
    </location>
</feature>
<feature type="strand" evidence="13">
    <location>
        <begin position="324"/>
        <end position="328"/>
    </location>
</feature>
<feature type="helix" evidence="13">
    <location>
        <begin position="330"/>
        <end position="333"/>
    </location>
</feature>
<feature type="strand" evidence="13">
    <location>
        <begin position="334"/>
        <end position="337"/>
    </location>
</feature>
<feature type="strand" evidence="13">
    <location>
        <begin position="340"/>
        <end position="350"/>
    </location>
</feature>
<feature type="strand" evidence="13">
    <location>
        <begin position="354"/>
        <end position="356"/>
    </location>
</feature>
<feature type="helix" evidence="13">
    <location>
        <begin position="358"/>
        <end position="361"/>
    </location>
</feature>
<feature type="strand" evidence="13">
    <location>
        <begin position="364"/>
        <end position="369"/>
    </location>
</feature>
<feature type="turn" evidence="13">
    <location>
        <begin position="370"/>
        <end position="373"/>
    </location>
</feature>
<feature type="strand" evidence="13">
    <location>
        <begin position="374"/>
        <end position="380"/>
    </location>
</feature>
<comment type="function">
    <text>Chymosin is synthesized in the mucosa of the abomasum (fourth stomach) of young (unweaned) ruminants. The enzyme hydrolyzes casein to paracasein.</text>
</comment>
<comment type="catalytic activity">
    <reaction>
        <text>Broad specificity similar to that of pepsin A. Clots milk by cleavage of a single 104-Ser-Phe-|-Met-Ala-107 bond in kappa-chain of casein.</text>
        <dbReference type="EC" id="3.4.23.4"/>
    </reaction>
</comment>
<comment type="subunit">
    <text>Monomer.</text>
</comment>
<comment type="polymorphism">
    <text>Forms A and B are probably allelic variants. Form B is the predominant form and differs only in one position.</text>
</comment>
<comment type="similarity">
    <text evidence="11">Belongs to the peptidase A1 family.</text>
</comment>
<accession>P00794</accession>
<accession>A8RRP5</accession>
<proteinExistence type="evidence at protein level"/>
<protein>
    <recommendedName>
        <fullName>Chymosin</fullName>
        <ecNumber>3.4.23.4</ecNumber>
    </recommendedName>
    <alternativeName>
        <fullName>Preprorennin</fullName>
    </alternativeName>
</protein>
<organism>
    <name type="scientific">Bos taurus</name>
    <name type="common">Bovine</name>
    <dbReference type="NCBI Taxonomy" id="9913"/>
    <lineage>
        <taxon>Eukaryota</taxon>
        <taxon>Metazoa</taxon>
        <taxon>Chordata</taxon>
        <taxon>Craniata</taxon>
        <taxon>Vertebrata</taxon>
        <taxon>Euteleostomi</taxon>
        <taxon>Mammalia</taxon>
        <taxon>Eutheria</taxon>
        <taxon>Laurasiatheria</taxon>
        <taxon>Artiodactyla</taxon>
        <taxon>Ruminantia</taxon>
        <taxon>Pecora</taxon>
        <taxon>Bovidae</taxon>
        <taxon>Bovinae</taxon>
        <taxon>Bos</taxon>
    </lineage>
</organism>
<gene>
    <name type="primary">CYM</name>
    <name type="synonym">CPC</name>
</gene>
<sequence length="381" mass="42180">MRCLVVLLAVFALSQGAEITRIPLYKGKSLRKALKEHGLLEDFLQKQQYGISSKYSGFGEVASVPLTNYLDSQYFGKIYLGTPPQEFTVLFDTGSSDFWVPSIYCKSNACKNHQRFDPRKSSTFQNLGKPLSIHYGTGSMQGILGYDTVTVSNIVDIQQTVGLSTQEPGDVFTYAEFDGILGMAYPSLASEYSIPVFDNMMNRHLVAQDLFSVYMDRNGQESMLTLGAIDPSYYTGSLHWVPVTVQQYWQFTVDSVTISGVVVACEGGCQAILDTGTSKLVGPSSDILNIQQAIGATQNQYGEFDIDCDNLSYMPTVVFEINGKMYPLTPSAYTSQDQGFCTSGFQSENHSQKWILGDVFIREYYSVFDRANNLVGLAKAI</sequence>
<evidence type="ECO:0000255" key="1">
    <source>
        <dbReference type="PROSITE-ProRule" id="PRU01103"/>
    </source>
</evidence>
<evidence type="ECO:0000255" key="2">
    <source>
        <dbReference type="PROSITE-ProRule" id="PRU10094"/>
    </source>
</evidence>
<evidence type="ECO:0000269" key="3">
    <source>
    </source>
</evidence>
<evidence type="ECO:0000269" key="4">
    <source>
    </source>
</evidence>
<evidence type="ECO:0000269" key="5">
    <source>
    </source>
</evidence>
<evidence type="ECO:0000269" key="6">
    <source>
    </source>
</evidence>
<evidence type="ECO:0000269" key="7">
    <source>
    </source>
</evidence>
<evidence type="ECO:0000269" key="8">
    <source>
    </source>
</evidence>
<evidence type="ECO:0000269" key="9">
    <source>
    </source>
</evidence>
<evidence type="ECO:0000269" key="10">
    <source>
    </source>
</evidence>
<evidence type="ECO:0000305" key="11"/>
<evidence type="ECO:0007829" key="12">
    <source>
        <dbReference type="PDB" id="3CMS"/>
    </source>
</evidence>
<evidence type="ECO:0007829" key="13">
    <source>
        <dbReference type="PDB" id="4AUC"/>
    </source>
</evidence>
<dbReference type="EC" id="3.4.23.4"/>
<dbReference type="EMBL" id="J00002">
    <property type="protein sequence ID" value="AAA30447.1"/>
    <property type="molecule type" value="mRNA"/>
</dbReference>
<dbReference type="EMBL" id="J00003">
    <property type="protein sequence ID" value="AAA30448.1"/>
    <property type="molecule type" value="mRNA"/>
</dbReference>
<dbReference type="EMBL" id="M14077">
    <property type="protein sequence ID" value="AAA30446.1"/>
    <property type="molecule type" value="Genomic_DNA"/>
</dbReference>
<dbReference type="EMBL" id="M14069">
    <property type="protein sequence ID" value="AAA30446.1"/>
    <property type="status" value="JOINED"/>
    <property type="molecule type" value="Genomic_DNA"/>
</dbReference>
<dbReference type="EMBL" id="M14070">
    <property type="protein sequence ID" value="AAA30446.1"/>
    <property type="status" value="JOINED"/>
    <property type="molecule type" value="Genomic_DNA"/>
</dbReference>
<dbReference type="EMBL" id="M14071">
    <property type="protein sequence ID" value="AAA30446.1"/>
    <property type="status" value="JOINED"/>
    <property type="molecule type" value="Genomic_DNA"/>
</dbReference>
<dbReference type="EMBL" id="M14072">
    <property type="protein sequence ID" value="AAA30446.1"/>
    <property type="status" value="JOINED"/>
    <property type="molecule type" value="Genomic_DNA"/>
</dbReference>
<dbReference type="EMBL" id="M14073">
    <property type="protein sequence ID" value="AAA30446.1"/>
    <property type="status" value="JOINED"/>
    <property type="molecule type" value="Genomic_DNA"/>
</dbReference>
<dbReference type="EMBL" id="M14074">
    <property type="protein sequence ID" value="AAA30446.1"/>
    <property type="status" value="JOINED"/>
    <property type="molecule type" value="Genomic_DNA"/>
</dbReference>
<dbReference type="EMBL" id="M14075">
    <property type="protein sequence ID" value="AAA30446.1"/>
    <property type="status" value="JOINED"/>
    <property type="molecule type" value="Genomic_DNA"/>
</dbReference>
<dbReference type="EMBL" id="EF541122">
    <property type="protein sequence ID" value="ABU41411.1"/>
    <property type="molecule type" value="mRNA"/>
</dbReference>
<dbReference type="PIR" id="A25631">
    <property type="entry name" value="CMBO"/>
</dbReference>
<dbReference type="RefSeq" id="NP_851337.1">
    <property type="nucleotide sequence ID" value="NM_180994.2"/>
</dbReference>
<dbReference type="PDB" id="1CMS">
    <property type="method" value="X-ray"/>
    <property type="resolution" value="2.30 A"/>
    <property type="chains" value="A=59-381"/>
</dbReference>
<dbReference type="PDB" id="1CZI">
    <property type="method" value="X-ray"/>
    <property type="resolution" value="2.30 A"/>
    <property type="chains" value="E=59-381"/>
</dbReference>
<dbReference type="PDB" id="3CMS">
    <property type="method" value="X-ray"/>
    <property type="resolution" value="2.00 A"/>
    <property type="chains" value="A=59-381"/>
</dbReference>
<dbReference type="PDB" id="4AA8">
    <property type="method" value="X-ray"/>
    <property type="resolution" value="1.80 A"/>
    <property type="chains" value="A=59-381"/>
</dbReference>
<dbReference type="PDB" id="4AUC">
    <property type="method" value="X-ray"/>
    <property type="resolution" value="1.60 A"/>
    <property type="chains" value="A=59-381"/>
</dbReference>
<dbReference type="PDB" id="4CMS">
    <property type="method" value="X-ray"/>
    <property type="resolution" value="2.20 A"/>
    <property type="chains" value="A=59-381"/>
</dbReference>
<dbReference type="PDBsum" id="1CMS"/>
<dbReference type="PDBsum" id="1CZI"/>
<dbReference type="PDBsum" id="3CMS"/>
<dbReference type="PDBsum" id="4AA8"/>
<dbReference type="PDBsum" id="4AUC"/>
<dbReference type="PDBsum" id="4CMS"/>
<dbReference type="SMR" id="P00794"/>
<dbReference type="FunCoup" id="P00794">
    <property type="interactions" value="78"/>
</dbReference>
<dbReference type="STRING" id="9913.ENSBTAP00000013970"/>
<dbReference type="Allergome" id="3882">
    <property type="allergen name" value="Bos d Chymosin"/>
</dbReference>
<dbReference type="MEROPS" id="A01.006"/>
<dbReference type="PaxDb" id="9913-ENSBTAP00000013970"/>
<dbReference type="ABCD" id="P00794">
    <property type="antibodies" value="11 sequenced antibodies"/>
</dbReference>
<dbReference type="Ensembl" id="ENSBTAT00000013970.4">
    <property type="protein sequence ID" value="ENSBTAP00000013970.3"/>
    <property type="gene ID" value="ENSBTAG00000010565.6"/>
</dbReference>
<dbReference type="GeneID" id="529879"/>
<dbReference type="KEGG" id="bta:529879"/>
<dbReference type="CTD" id="229697"/>
<dbReference type="VEuPathDB" id="HostDB:ENSBTAG00000010565"/>
<dbReference type="VGNC" id="VGNC:108923">
    <property type="gene designation" value="CYM"/>
</dbReference>
<dbReference type="eggNOG" id="KOG1339">
    <property type="taxonomic scope" value="Eukaryota"/>
</dbReference>
<dbReference type="GeneTree" id="ENSGT00940000162710"/>
<dbReference type="HOGENOM" id="CLU_013253_3_0_1"/>
<dbReference type="InParanoid" id="P00794"/>
<dbReference type="OMA" id="TPVFDHM"/>
<dbReference type="OrthoDB" id="771136at2759"/>
<dbReference type="TreeFam" id="TF314990"/>
<dbReference type="BRENDA" id="3.4.23.4">
    <property type="organism ID" value="908"/>
</dbReference>
<dbReference type="SABIO-RK" id="P00794"/>
<dbReference type="EvolutionaryTrace" id="P00794"/>
<dbReference type="Proteomes" id="UP000009136">
    <property type="component" value="Chromosome 3"/>
</dbReference>
<dbReference type="Bgee" id="ENSBTAG00000010565">
    <property type="expression patterns" value="Expressed in urinary bladder and 4 other cell types or tissues"/>
</dbReference>
<dbReference type="GO" id="GO:0004190">
    <property type="term" value="F:aspartic-type endopeptidase activity"/>
    <property type="evidence" value="ECO:0000318"/>
    <property type="project" value="GO_Central"/>
</dbReference>
<dbReference type="GO" id="GO:0007586">
    <property type="term" value="P:digestion"/>
    <property type="evidence" value="ECO:0007669"/>
    <property type="project" value="UniProtKB-KW"/>
</dbReference>
<dbReference type="GO" id="GO:0006508">
    <property type="term" value="P:proteolysis"/>
    <property type="evidence" value="ECO:0000318"/>
    <property type="project" value="GO_Central"/>
</dbReference>
<dbReference type="CDD" id="cd05478">
    <property type="entry name" value="pepsin_A"/>
    <property type="match status" value="1"/>
</dbReference>
<dbReference type="FunFam" id="2.40.70.10:FF:000006">
    <property type="entry name" value="Cathepsin E"/>
    <property type="match status" value="1"/>
</dbReference>
<dbReference type="FunFam" id="2.40.70.10:FF:000004">
    <property type="entry name" value="Pepsin A"/>
    <property type="match status" value="1"/>
</dbReference>
<dbReference type="Gene3D" id="6.10.140.60">
    <property type="match status" value="1"/>
</dbReference>
<dbReference type="Gene3D" id="2.40.70.10">
    <property type="entry name" value="Acid Proteases"/>
    <property type="match status" value="2"/>
</dbReference>
<dbReference type="InterPro" id="IPR001461">
    <property type="entry name" value="Aspartic_peptidase_A1"/>
</dbReference>
<dbReference type="InterPro" id="IPR001969">
    <property type="entry name" value="Aspartic_peptidase_AS"/>
</dbReference>
<dbReference type="InterPro" id="IPR012848">
    <property type="entry name" value="Aspartic_peptidase_N"/>
</dbReference>
<dbReference type="InterPro" id="IPR034162">
    <property type="entry name" value="Pepsin_A"/>
</dbReference>
<dbReference type="InterPro" id="IPR033121">
    <property type="entry name" value="PEPTIDASE_A1"/>
</dbReference>
<dbReference type="InterPro" id="IPR021109">
    <property type="entry name" value="Peptidase_aspartic_dom_sf"/>
</dbReference>
<dbReference type="PANTHER" id="PTHR47966">
    <property type="entry name" value="BETA-SITE APP-CLEAVING ENZYME, ISOFORM A-RELATED"/>
    <property type="match status" value="1"/>
</dbReference>
<dbReference type="PANTHER" id="PTHR47966:SF13">
    <property type="entry name" value="CHYMOSIN"/>
    <property type="match status" value="1"/>
</dbReference>
<dbReference type="Pfam" id="PF07966">
    <property type="entry name" value="A1_Propeptide"/>
    <property type="match status" value="1"/>
</dbReference>
<dbReference type="Pfam" id="PF00026">
    <property type="entry name" value="Asp"/>
    <property type="match status" value="1"/>
</dbReference>
<dbReference type="PRINTS" id="PR00792">
    <property type="entry name" value="PEPSIN"/>
</dbReference>
<dbReference type="SUPFAM" id="SSF50630">
    <property type="entry name" value="Acid proteases"/>
    <property type="match status" value="1"/>
</dbReference>
<dbReference type="PROSITE" id="PS00141">
    <property type="entry name" value="ASP_PROTEASE"/>
    <property type="match status" value="2"/>
</dbReference>
<dbReference type="PROSITE" id="PS51767">
    <property type="entry name" value="PEPTIDASE_A1"/>
    <property type="match status" value="1"/>
</dbReference>
<reference key="1">
    <citation type="journal article" date="1982" name="Gene">
        <title>Molecular cloning and characterization of double-stranded cDNA coding for bovine chymosin.</title>
        <authorList>
            <person name="Moir D."/>
            <person name="Mao J."/>
            <person name="Schumm J.W."/>
            <person name="Vovis G.F."/>
            <person name="Alford B.L."/>
            <person name="Taunton-Rigby A."/>
        </authorList>
    </citation>
    <scope>NUCLEOTIDE SEQUENCE [MRNA]</scope>
    <scope>VARIANT ASP-302</scope>
</reference>
<reference key="2">
    <citation type="journal article" date="1982" name="Nucleic Acids Res.">
        <title>Molecular cloning and nucleotide sequence of cDNA coding for calf preprochymosin.</title>
        <authorList>
            <person name="Harris T.J.R."/>
            <person name="Lowe P.A."/>
            <person name="Lyons A."/>
            <person name="Thomas P.G."/>
            <person name="Eaton M.A.W."/>
            <person name="Millican T.A."/>
            <person name="Patel T.P."/>
            <person name="Bose C.C."/>
            <person name="Carey N.H."/>
            <person name="Doel M.T."/>
        </authorList>
    </citation>
    <scope>NUCLEOTIDE SEQUENCE [MRNA]</scope>
</reference>
<reference key="3">
    <citation type="journal article" date="1986" name="Gene">
        <title>Cloning and structural analysis of the calf prochymosin gene.</title>
        <authorList>
            <person name="Hidaka M."/>
            <person name="Sasaki K."/>
            <person name="Uozumi T."/>
            <person name="Beppu T."/>
        </authorList>
    </citation>
    <scope>NUCLEOTIDE SEQUENCE [GENOMIC DNA]</scope>
</reference>
<reference key="4">
    <citation type="submission" date="2007-04" db="EMBL/GenBank/DDBJ databases">
        <title>cDNA encoding bovine calf preprochymosin.</title>
        <authorList>
            <person name="Sun D."/>
            <person name="Jiang Y."/>
        </authorList>
    </citation>
    <scope>NUCLEOTIDE SEQUENCE [MRNA]</scope>
</reference>
<reference key="5">
    <citation type="journal article" date="1982" name="J. Biochem.">
        <title>Nucleotide sequence of calf prorennin cDNA cloned in Escherichia coli.</title>
        <authorList>
            <person name="Nishimori K."/>
            <person name="Kawaguchi Y."/>
            <person name="Hidaka M."/>
            <person name="Uozumi T."/>
            <person name="Beppu T."/>
        </authorList>
    </citation>
    <scope>NUCLEOTIDE SEQUENCE [MRNA] OF 140-381</scope>
    <scope>VARIANT ASP-302</scope>
</reference>
<reference key="6">
    <citation type="journal article" date="1985" name="J. Biochem.">
        <title>Isolation of human, swine, and rat prepepsinogens and calf preprochymosin, and determination of the primary structures of their NH2-terminal signal sequences.</title>
        <authorList>
            <person name="Ichihara Y."/>
            <person name="Sogawa K."/>
            <person name="Takahashi K."/>
        </authorList>
    </citation>
    <scope>PROTEIN SEQUENCE OF 1-30 (PRECURSOR PROTEIN)</scope>
</reference>
<reference key="7">
    <citation type="journal article" date="1977" name="Proc. Natl. Acad. Sci. U.S.A.">
        <title>The complete amino acid sequence of prochymosin.</title>
        <authorList>
            <person name="Foltmann B."/>
            <person name="Pedersen V.B."/>
            <person name="Jacobsen H."/>
            <person name="Kauffman D."/>
            <person name="Wybrandt G."/>
        </authorList>
    </citation>
    <scope>PROTEIN SEQUENCE OF 17-381</scope>
</reference>
<reference key="8">
    <citation type="journal article" date="1975" name="Eur. J. Biochem.">
        <title>Amino-acid sequence of the peptide segment liberated during activation of prochymosin (prorennin).</title>
        <authorList>
            <person name="Pedersen V.B."/>
            <person name="Foltmann B."/>
        </authorList>
    </citation>
    <scope>PROTEIN SEQUENCE OF 17-77</scope>
</reference>
<reference key="9">
    <citation type="journal article" date="1979" name="J. Biol. Chem.">
        <title>The primary structure of calf chymosin.</title>
        <authorList>
            <person name="Foltmann B."/>
            <person name="Pedersen V.B."/>
            <person name="Kauffman D."/>
            <person name="Wybrandt G."/>
        </authorList>
    </citation>
    <scope>PROTEIN SEQUENCE OF 59-381</scope>
    <scope>DISULFIDE BONDS</scope>
</reference>
<reference key="10">
    <citation type="journal article" date="1974" name="J. Biochem.">
        <title>The structure and function of acid proteases. III. Isolation and characterization of the active-site peptides from bovine rennin.</title>
        <authorList>
            <person name="Chang W.-J."/>
            <person name="Takahashi K."/>
        </authorList>
    </citation>
    <scope>ACTIVE SITE PEPTIDES</scope>
</reference>
<reference key="11">
    <citation type="journal article" date="1991" name="J. Mol. Biol.">
        <title>X-ray analyses of aspartic proteinases. IV. Structure and refinement at 2.2-A resolution of bovine chymosin.</title>
        <authorList>
            <person name="Newman M."/>
            <person name="Safro M."/>
            <person name="Frazao C."/>
            <person name="Kahn G."/>
            <person name="Zdanov A."/>
            <person name="Tickle I.J."/>
            <person name="Blundell T.L."/>
            <person name="Andreeva N."/>
        </authorList>
    </citation>
    <scope>X-RAY CRYSTALLOGRAPHY (2.2 ANGSTROMS)</scope>
</reference>
<reference key="12">
    <citation type="journal article" date="1990" name="Biochemistry">
        <title>Engineering enzyme subsite specificity: preparation, kinetic characterization, and X-ray analysis at 2.0-A resolution of Val111Phe site-mutated calf chymosin.</title>
        <authorList>
            <person name="Strop P."/>
            <person name="Sedlacek J."/>
            <person name="Stys J."/>
            <person name="Kaderabkova Z."/>
            <person name="Blaha I."/>
            <person name="Pavlickova L."/>
            <person name="Pohl J."/>
            <person name="Fabry M."/>
            <person name="Kostka V."/>
            <person name="Newman M."/>
            <person name="Frazao C."/>
            <person name="Shearer A."/>
            <person name="Tickle I.J."/>
            <person name="Blundell T.L."/>
        </authorList>
    </citation>
    <scope>X-RAY CRYSTALLOGRAPHY (2.0 ANGSTROMS) OF MUTANT</scope>
</reference>
<reference key="13">
    <citation type="journal article" date="1990" name="Proteins">
        <title>The three-dimensional structure of recombinant bovine chymosin at 2.3-A resolution.</title>
        <authorList>
            <person name="Gilliland G.L."/>
            <person name="Winborne E.L."/>
            <person name="Nachman J."/>
            <person name="Wlodawer A."/>
        </authorList>
    </citation>
    <scope>X-RAY CRYSTALLOGRAPHY (2.3 ANGSTROMS)</scope>
</reference>
<reference key="14">
    <citation type="journal article" date="1992" name="Biochem. Biophys. Res. Commun.">
        <title>Functional implication of disulfide bond, Cys250 -Cys283, in bovine chymosin.</title>
        <authorList>
            <person name="Huang K."/>
            <person name="Zhang Z."/>
            <person name="Liu N."/>
            <person name="Zhang Y."/>
            <person name="Zhang G."/>
            <person name="Yang K."/>
        </authorList>
    </citation>
    <scope>MUTAGENESIS OF CYS-308 AND CYS-341</scope>
</reference>
<name>CHYM_BOVIN</name>